<proteinExistence type="inferred from homology"/>
<keyword id="KW-0030">Aminoacyl-tRNA synthetase</keyword>
<keyword id="KW-0067">ATP-binding</keyword>
<keyword id="KW-0963">Cytoplasm</keyword>
<keyword id="KW-0436">Ligase</keyword>
<keyword id="KW-0460">Magnesium</keyword>
<keyword id="KW-0479">Metal-binding</keyword>
<keyword id="KW-0547">Nucleotide-binding</keyword>
<keyword id="KW-0648">Protein biosynthesis</keyword>
<keyword id="KW-1185">Reference proteome</keyword>
<dbReference type="EC" id="6.1.1.20" evidence="1"/>
<dbReference type="EMBL" id="CP000034">
    <property type="protein sequence ID" value="ABB61920.1"/>
    <property type="molecule type" value="Genomic_DNA"/>
</dbReference>
<dbReference type="RefSeq" id="WP_000018581.1">
    <property type="nucleotide sequence ID" value="NC_007606.1"/>
</dbReference>
<dbReference type="RefSeq" id="YP_403411.1">
    <property type="nucleotide sequence ID" value="NC_007606.1"/>
</dbReference>
<dbReference type="SMR" id="Q32FI5"/>
<dbReference type="STRING" id="300267.SDY_1809"/>
<dbReference type="EnsemblBacteria" id="ABB61920">
    <property type="protein sequence ID" value="ABB61920"/>
    <property type="gene ID" value="SDY_1809"/>
</dbReference>
<dbReference type="KEGG" id="sdy:SDY_1809"/>
<dbReference type="PATRIC" id="fig|300267.13.peg.2181"/>
<dbReference type="HOGENOM" id="CLU_025086_0_1_6"/>
<dbReference type="Proteomes" id="UP000002716">
    <property type="component" value="Chromosome"/>
</dbReference>
<dbReference type="GO" id="GO:0005737">
    <property type="term" value="C:cytoplasm"/>
    <property type="evidence" value="ECO:0007669"/>
    <property type="project" value="UniProtKB-SubCell"/>
</dbReference>
<dbReference type="GO" id="GO:0005524">
    <property type="term" value="F:ATP binding"/>
    <property type="evidence" value="ECO:0007669"/>
    <property type="project" value="UniProtKB-UniRule"/>
</dbReference>
<dbReference type="GO" id="GO:0000287">
    <property type="term" value="F:magnesium ion binding"/>
    <property type="evidence" value="ECO:0007669"/>
    <property type="project" value="UniProtKB-UniRule"/>
</dbReference>
<dbReference type="GO" id="GO:0004826">
    <property type="term" value="F:phenylalanine-tRNA ligase activity"/>
    <property type="evidence" value="ECO:0007669"/>
    <property type="project" value="UniProtKB-UniRule"/>
</dbReference>
<dbReference type="GO" id="GO:0000049">
    <property type="term" value="F:tRNA binding"/>
    <property type="evidence" value="ECO:0007669"/>
    <property type="project" value="InterPro"/>
</dbReference>
<dbReference type="GO" id="GO:0006432">
    <property type="term" value="P:phenylalanyl-tRNA aminoacylation"/>
    <property type="evidence" value="ECO:0007669"/>
    <property type="project" value="UniProtKB-UniRule"/>
</dbReference>
<dbReference type="CDD" id="cd00496">
    <property type="entry name" value="PheRS_alpha_core"/>
    <property type="match status" value="1"/>
</dbReference>
<dbReference type="FunFam" id="3.30.930.10:FF:000003">
    <property type="entry name" value="Phenylalanine--tRNA ligase alpha subunit"/>
    <property type="match status" value="1"/>
</dbReference>
<dbReference type="Gene3D" id="3.30.930.10">
    <property type="entry name" value="Bira Bifunctional Protein, Domain 2"/>
    <property type="match status" value="1"/>
</dbReference>
<dbReference type="HAMAP" id="MF_00281">
    <property type="entry name" value="Phe_tRNA_synth_alpha1"/>
    <property type="match status" value="1"/>
</dbReference>
<dbReference type="InterPro" id="IPR006195">
    <property type="entry name" value="aa-tRNA-synth_II"/>
</dbReference>
<dbReference type="InterPro" id="IPR045864">
    <property type="entry name" value="aa-tRNA-synth_II/BPL/LPL"/>
</dbReference>
<dbReference type="InterPro" id="IPR004529">
    <property type="entry name" value="Phe-tRNA-synth_IIc_asu"/>
</dbReference>
<dbReference type="InterPro" id="IPR004188">
    <property type="entry name" value="Phe-tRNA_ligase_II_N"/>
</dbReference>
<dbReference type="InterPro" id="IPR022911">
    <property type="entry name" value="Phe_tRNA_ligase_alpha1_bac"/>
</dbReference>
<dbReference type="InterPro" id="IPR002319">
    <property type="entry name" value="Phenylalanyl-tRNA_Synthase"/>
</dbReference>
<dbReference type="InterPro" id="IPR010978">
    <property type="entry name" value="tRNA-bd_arm"/>
</dbReference>
<dbReference type="NCBIfam" id="TIGR00468">
    <property type="entry name" value="pheS"/>
    <property type="match status" value="1"/>
</dbReference>
<dbReference type="PANTHER" id="PTHR11538:SF41">
    <property type="entry name" value="PHENYLALANINE--TRNA LIGASE, MITOCHONDRIAL"/>
    <property type="match status" value="1"/>
</dbReference>
<dbReference type="PANTHER" id="PTHR11538">
    <property type="entry name" value="PHENYLALANYL-TRNA SYNTHETASE"/>
    <property type="match status" value="1"/>
</dbReference>
<dbReference type="Pfam" id="PF02912">
    <property type="entry name" value="Phe_tRNA-synt_N"/>
    <property type="match status" value="1"/>
</dbReference>
<dbReference type="Pfam" id="PF01409">
    <property type="entry name" value="tRNA-synt_2d"/>
    <property type="match status" value="1"/>
</dbReference>
<dbReference type="SUPFAM" id="SSF55681">
    <property type="entry name" value="Class II aaRS and biotin synthetases"/>
    <property type="match status" value="1"/>
</dbReference>
<dbReference type="SUPFAM" id="SSF46589">
    <property type="entry name" value="tRNA-binding arm"/>
    <property type="match status" value="1"/>
</dbReference>
<dbReference type="PROSITE" id="PS50862">
    <property type="entry name" value="AA_TRNA_LIGASE_II"/>
    <property type="match status" value="1"/>
</dbReference>
<gene>
    <name evidence="1" type="primary">pheS</name>
    <name type="ordered locus">SDY_1809</name>
</gene>
<accession>Q32FI5</accession>
<comment type="catalytic activity">
    <reaction evidence="1">
        <text>tRNA(Phe) + L-phenylalanine + ATP = L-phenylalanyl-tRNA(Phe) + AMP + diphosphate + H(+)</text>
        <dbReference type="Rhea" id="RHEA:19413"/>
        <dbReference type="Rhea" id="RHEA-COMP:9668"/>
        <dbReference type="Rhea" id="RHEA-COMP:9699"/>
        <dbReference type="ChEBI" id="CHEBI:15378"/>
        <dbReference type="ChEBI" id="CHEBI:30616"/>
        <dbReference type="ChEBI" id="CHEBI:33019"/>
        <dbReference type="ChEBI" id="CHEBI:58095"/>
        <dbReference type="ChEBI" id="CHEBI:78442"/>
        <dbReference type="ChEBI" id="CHEBI:78531"/>
        <dbReference type="ChEBI" id="CHEBI:456215"/>
        <dbReference type="EC" id="6.1.1.20"/>
    </reaction>
</comment>
<comment type="cofactor">
    <cofactor evidence="1">
        <name>Mg(2+)</name>
        <dbReference type="ChEBI" id="CHEBI:18420"/>
    </cofactor>
    <text evidence="1">Binds 2 magnesium ions per tetramer.</text>
</comment>
<comment type="subunit">
    <text evidence="1">Tetramer of two alpha and two beta subunits.</text>
</comment>
<comment type="subcellular location">
    <subcellularLocation>
        <location evidence="1">Cytoplasm</location>
    </subcellularLocation>
</comment>
<comment type="similarity">
    <text evidence="1">Belongs to the class-II aminoacyl-tRNA synthetase family. Phe-tRNA synthetase alpha subunit type 1 subfamily.</text>
</comment>
<evidence type="ECO:0000255" key="1">
    <source>
        <dbReference type="HAMAP-Rule" id="MF_00281"/>
    </source>
</evidence>
<organism>
    <name type="scientific">Shigella dysenteriae serotype 1 (strain Sd197)</name>
    <dbReference type="NCBI Taxonomy" id="300267"/>
    <lineage>
        <taxon>Bacteria</taxon>
        <taxon>Pseudomonadati</taxon>
        <taxon>Pseudomonadota</taxon>
        <taxon>Gammaproteobacteria</taxon>
        <taxon>Enterobacterales</taxon>
        <taxon>Enterobacteriaceae</taxon>
        <taxon>Shigella</taxon>
    </lineage>
</organism>
<sequence>MSHLAELVASAKAAISQASDVAALDNVRVEYLGKKGHLTLQMTTLRELPPEERPAAGAVINEAKEQVQQALNARKAELESAALNARLAADTIDVSLPGRRIENGGLHPVTRTIDRIESFFGELGFTVATGPEIEDDYHNFDALNIPGHHPARADHDTFWFDATRLLRTQTSGVQIRTMKAQQPPIRIIAPGRVYRNDYDQTHTPMFHQMEGLIVDTNISFTNLKGTLHDFLRNFFEEDLQIRFRPSYFPFTEPSAEVDVMGKNGKWLEVLGCGMVHPNVLRNVGIDPEVYSGFAFGMGMERLTMLRYGVTDLRSFFENDLRFLKQFK</sequence>
<protein>
    <recommendedName>
        <fullName evidence="1">Phenylalanine--tRNA ligase alpha subunit</fullName>
        <ecNumber evidence="1">6.1.1.20</ecNumber>
    </recommendedName>
    <alternativeName>
        <fullName evidence="1">Phenylalanyl-tRNA synthetase alpha subunit</fullName>
        <shortName evidence="1">PheRS</shortName>
    </alternativeName>
</protein>
<reference key="1">
    <citation type="journal article" date="2005" name="Nucleic Acids Res.">
        <title>Genome dynamics and diversity of Shigella species, the etiologic agents of bacillary dysentery.</title>
        <authorList>
            <person name="Yang F."/>
            <person name="Yang J."/>
            <person name="Zhang X."/>
            <person name="Chen L."/>
            <person name="Jiang Y."/>
            <person name="Yan Y."/>
            <person name="Tang X."/>
            <person name="Wang J."/>
            <person name="Xiong Z."/>
            <person name="Dong J."/>
            <person name="Xue Y."/>
            <person name="Zhu Y."/>
            <person name="Xu X."/>
            <person name="Sun L."/>
            <person name="Chen S."/>
            <person name="Nie H."/>
            <person name="Peng J."/>
            <person name="Xu J."/>
            <person name="Wang Y."/>
            <person name="Yuan Z."/>
            <person name="Wen Y."/>
            <person name="Yao Z."/>
            <person name="Shen Y."/>
            <person name="Qiang B."/>
            <person name="Hou Y."/>
            <person name="Yu J."/>
            <person name="Jin Q."/>
        </authorList>
    </citation>
    <scope>NUCLEOTIDE SEQUENCE [LARGE SCALE GENOMIC DNA]</scope>
    <source>
        <strain>Sd197</strain>
    </source>
</reference>
<name>SYFA_SHIDS</name>
<feature type="chain" id="PRO_0000232024" description="Phenylalanine--tRNA ligase alpha subunit">
    <location>
        <begin position="1"/>
        <end position="327"/>
    </location>
</feature>
<feature type="binding site" evidence="1">
    <location>
        <position position="252"/>
    </location>
    <ligand>
        <name>Mg(2+)</name>
        <dbReference type="ChEBI" id="CHEBI:18420"/>
        <note>shared with beta subunit</note>
    </ligand>
</feature>